<organism>
    <name type="scientific">Rickettsia rickettsii (strain Iowa)</name>
    <dbReference type="NCBI Taxonomy" id="452659"/>
    <lineage>
        <taxon>Bacteria</taxon>
        <taxon>Pseudomonadati</taxon>
        <taxon>Pseudomonadota</taxon>
        <taxon>Alphaproteobacteria</taxon>
        <taxon>Rickettsiales</taxon>
        <taxon>Rickettsiaceae</taxon>
        <taxon>Rickettsieae</taxon>
        <taxon>Rickettsia</taxon>
        <taxon>spotted fever group</taxon>
    </lineage>
</organism>
<sequence>MIKILGIESSCDDTAVSIITENREILSNIIISQNTEHAVFGGVVPEIAARSHLSHLDKALKNVLKESNTKLTDISTIAATSGPGLIGGVIVGSMFARSLSSALKKPFIAINHLEGHALTARLTDNIPYPYLLLLASGGHCQFVAVLGLGKYKILGSTIDDAVGEAFDKVAKMLNLAFPGGPEIEKRAKLGDPHKYKFPKPIINSGNCNMSFSGLKTAVRTLIMNLKEINDTVINDIAASFQFTIGEILSSKVQDAIRAYEQITNNFDKKNIVIAGGVAANKYLQKILSSCAKTYGYRLIYPPIHLCTDNAAMIAYAGLERYNNKLFTPLNFSPKARWSLEDISN</sequence>
<evidence type="ECO:0000255" key="1">
    <source>
        <dbReference type="HAMAP-Rule" id="MF_01445"/>
    </source>
</evidence>
<gene>
    <name evidence="1" type="primary">tsaD</name>
    <name type="synonym">gcp</name>
    <name type="ordered locus">RrIowa_0081</name>
</gene>
<reference key="1">
    <citation type="journal article" date="2008" name="Infect. Immun.">
        <title>Genomic comparison of virulent Rickettsia rickettsii Sheila Smith and avirulent Rickettsia rickettsii Iowa.</title>
        <authorList>
            <person name="Ellison D.W."/>
            <person name="Clark T.R."/>
            <person name="Sturdevant D.E."/>
            <person name="Virtaneva K."/>
            <person name="Porcella S.F."/>
            <person name="Hackstadt T."/>
        </authorList>
    </citation>
    <scope>NUCLEOTIDE SEQUENCE [LARGE SCALE GENOMIC DNA]</scope>
    <source>
        <strain>Iowa</strain>
    </source>
</reference>
<protein>
    <recommendedName>
        <fullName evidence="1">tRNA N6-adenosine threonylcarbamoyltransferase</fullName>
        <ecNumber evidence="1">2.3.1.234</ecNumber>
    </recommendedName>
    <alternativeName>
        <fullName evidence="1">N6-L-threonylcarbamoyladenine synthase</fullName>
        <shortName evidence="1">t(6)A synthase</shortName>
    </alternativeName>
    <alternativeName>
        <fullName evidence="1">t(6)A37 threonylcarbamoyladenosine biosynthesis protein TsaD</fullName>
    </alternativeName>
    <alternativeName>
        <fullName evidence="1">tRNA threonylcarbamoyladenosine biosynthesis protein TsaD</fullName>
    </alternativeName>
</protein>
<name>TSAD_RICRO</name>
<comment type="function">
    <text evidence="1">Required for the formation of a threonylcarbamoyl group on adenosine at position 37 (t(6)A37) in tRNAs that read codons beginning with adenine. Is involved in the transfer of the threonylcarbamoyl moiety of threonylcarbamoyl-AMP (TC-AMP) to the N6 group of A37, together with TsaE and TsaB. TsaD likely plays a direct catalytic role in this reaction.</text>
</comment>
<comment type="catalytic activity">
    <reaction evidence="1">
        <text>L-threonylcarbamoyladenylate + adenosine(37) in tRNA = N(6)-L-threonylcarbamoyladenosine(37) in tRNA + AMP + H(+)</text>
        <dbReference type="Rhea" id="RHEA:37059"/>
        <dbReference type="Rhea" id="RHEA-COMP:10162"/>
        <dbReference type="Rhea" id="RHEA-COMP:10163"/>
        <dbReference type="ChEBI" id="CHEBI:15378"/>
        <dbReference type="ChEBI" id="CHEBI:73682"/>
        <dbReference type="ChEBI" id="CHEBI:74411"/>
        <dbReference type="ChEBI" id="CHEBI:74418"/>
        <dbReference type="ChEBI" id="CHEBI:456215"/>
        <dbReference type="EC" id="2.3.1.234"/>
    </reaction>
</comment>
<comment type="cofactor">
    <cofactor evidence="1">
        <name>Fe(2+)</name>
        <dbReference type="ChEBI" id="CHEBI:29033"/>
    </cofactor>
    <text evidence="1">Binds 1 Fe(2+) ion per subunit.</text>
</comment>
<comment type="subcellular location">
    <subcellularLocation>
        <location evidence="1">Cytoplasm</location>
    </subcellularLocation>
</comment>
<comment type="similarity">
    <text evidence="1">Belongs to the KAE1 / TsaD family.</text>
</comment>
<accession>B0BVX7</accession>
<proteinExistence type="inferred from homology"/>
<dbReference type="EC" id="2.3.1.234" evidence="1"/>
<dbReference type="EMBL" id="CP000766">
    <property type="protein sequence ID" value="ABY72003.1"/>
    <property type="molecule type" value="Genomic_DNA"/>
</dbReference>
<dbReference type="RefSeq" id="WP_012150289.1">
    <property type="nucleotide sequence ID" value="NC_010263.3"/>
</dbReference>
<dbReference type="SMR" id="B0BVX7"/>
<dbReference type="GeneID" id="79936864"/>
<dbReference type="KEGG" id="rrj:RrIowa_0081"/>
<dbReference type="eggNOG" id="COG0533">
    <property type="taxonomic scope" value="Bacteria"/>
</dbReference>
<dbReference type="HOGENOM" id="CLU_023208_0_2_5"/>
<dbReference type="Proteomes" id="UP000000796">
    <property type="component" value="Chromosome"/>
</dbReference>
<dbReference type="GO" id="GO:0005737">
    <property type="term" value="C:cytoplasm"/>
    <property type="evidence" value="ECO:0007669"/>
    <property type="project" value="UniProtKB-SubCell"/>
</dbReference>
<dbReference type="GO" id="GO:0005506">
    <property type="term" value="F:iron ion binding"/>
    <property type="evidence" value="ECO:0007669"/>
    <property type="project" value="UniProtKB-UniRule"/>
</dbReference>
<dbReference type="GO" id="GO:0061711">
    <property type="term" value="F:N(6)-L-threonylcarbamoyladenine synthase activity"/>
    <property type="evidence" value="ECO:0007669"/>
    <property type="project" value="UniProtKB-EC"/>
</dbReference>
<dbReference type="GO" id="GO:0002949">
    <property type="term" value="P:tRNA threonylcarbamoyladenosine modification"/>
    <property type="evidence" value="ECO:0007669"/>
    <property type="project" value="UniProtKB-UniRule"/>
</dbReference>
<dbReference type="CDD" id="cd24133">
    <property type="entry name" value="ASKHA_NBD_TsaD_bac"/>
    <property type="match status" value="1"/>
</dbReference>
<dbReference type="FunFam" id="3.30.420.40:FF:000040">
    <property type="entry name" value="tRNA N6-adenosine threonylcarbamoyltransferase"/>
    <property type="match status" value="1"/>
</dbReference>
<dbReference type="Gene3D" id="3.30.420.40">
    <property type="match status" value="2"/>
</dbReference>
<dbReference type="HAMAP" id="MF_01445">
    <property type="entry name" value="TsaD"/>
    <property type="match status" value="1"/>
</dbReference>
<dbReference type="InterPro" id="IPR043129">
    <property type="entry name" value="ATPase_NBD"/>
</dbReference>
<dbReference type="InterPro" id="IPR000905">
    <property type="entry name" value="Gcp-like_dom"/>
</dbReference>
<dbReference type="InterPro" id="IPR017861">
    <property type="entry name" value="KAE1/TsaD"/>
</dbReference>
<dbReference type="InterPro" id="IPR017860">
    <property type="entry name" value="Peptidase_M22_CS"/>
</dbReference>
<dbReference type="InterPro" id="IPR022450">
    <property type="entry name" value="TsaD"/>
</dbReference>
<dbReference type="NCBIfam" id="TIGR00329">
    <property type="entry name" value="gcp_kae1"/>
    <property type="match status" value="1"/>
</dbReference>
<dbReference type="NCBIfam" id="TIGR03723">
    <property type="entry name" value="T6A_TsaD_YgjD"/>
    <property type="match status" value="1"/>
</dbReference>
<dbReference type="PANTHER" id="PTHR11735">
    <property type="entry name" value="TRNA N6-ADENOSINE THREONYLCARBAMOYLTRANSFERASE"/>
    <property type="match status" value="1"/>
</dbReference>
<dbReference type="PANTHER" id="PTHR11735:SF6">
    <property type="entry name" value="TRNA N6-ADENOSINE THREONYLCARBAMOYLTRANSFERASE, MITOCHONDRIAL"/>
    <property type="match status" value="1"/>
</dbReference>
<dbReference type="Pfam" id="PF00814">
    <property type="entry name" value="TsaD"/>
    <property type="match status" value="1"/>
</dbReference>
<dbReference type="PRINTS" id="PR00789">
    <property type="entry name" value="OSIALOPTASE"/>
</dbReference>
<dbReference type="SUPFAM" id="SSF53067">
    <property type="entry name" value="Actin-like ATPase domain"/>
    <property type="match status" value="2"/>
</dbReference>
<dbReference type="PROSITE" id="PS01016">
    <property type="entry name" value="GLYCOPROTEASE"/>
    <property type="match status" value="1"/>
</dbReference>
<feature type="chain" id="PRO_1000087485" description="tRNA N6-adenosine threonylcarbamoyltransferase">
    <location>
        <begin position="1"/>
        <end position="344"/>
    </location>
</feature>
<feature type="binding site" evidence="1">
    <location>
        <position position="112"/>
    </location>
    <ligand>
        <name>Fe cation</name>
        <dbReference type="ChEBI" id="CHEBI:24875"/>
    </ligand>
</feature>
<feature type="binding site" evidence="1">
    <location>
        <position position="116"/>
    </location>
    <ligand>
        <name>Fe cation</name>
        <dbReference type="ChEBI" id="CHEBI:24875"/>
    </ligand>
</feature>
<feature type="binding site" evidence="1">
    <location>
        <begin position="134"/>
        <end position="138"/>
    </location>
    <ligand>
        <name>substrate</name>
    </ligand>
</feature>
<feature type="binding site" evidence="1">
    <location>
        <position position="167"/>
    </location>
    <ligand>
        <name>substrate</name>
    </ligand>
</feature>
<feature type="binding site" evidence="1">
    <location>
        <position position="180"/>
    </location>
    <ligand>
        <name>substrate</name>
    </ligand>
</feature>
<feature type="binding site" evidence="1">
    <location>
        <position position="280"/>
    </location>
    <ligand>
        <name>substrate</name>
    </ligand>
</feature>
<feature type="binding site" evidence="1">
    <location>
        <position position="308"/>
    </location>
    <ligand>
        <name>Fe cation</name>
        <dbReference type="ChEBI" id="CHEBI:24875"/>
    </ligand>
</feature>
<keyword id="KW-0012">Acyltransferase</keyword>
<keyword id="KW-0963">Cytoplasm</keyword>
<keyword id="KW-0408">Iron</keyword>
<keyword id="KW-0479">Metal-binding</keyword>
<keyword id="KW-0808">Transferase</keyword>
<keyword id="KW-0819">tRNA processing</keyword>